<evidence type="ECO:0000255" key="1">
    <source>
        <dbReference type="HAMAP-Rule" id="MF_01622"/>
    </source>
</evidence>
<proteinExistence type="inferred from homology"/>
<name>SELU_CUPNH</name>
<keyword id="KW-1185">Reference proteome</keyword>
<keyword id="KW-0711">Selenium</keyword>
<keyword id="KW-0808">Transferase</keyword>
<accession>Q0KEU1</accession>
<reference key="1">
    <citation type="journal article" date="2006" name="Nat. Biotechnol.">
        <title>Genome sequence of the bioplastic-producing 'Knallgas' bacterium Ralstonia eutropha H16.</title>
        <authorList>
            <person name="Pohlmann A."/>
            <person name="Fricke W.F."/>
            <person name="Reinecke F."/>
            <person name="Kusian B."/>
            <person name="Liesegang H."/>
            <person name="Cramm R."/>
            <person name="Eitinger T."/>
            <person name="Ewering C."/>
            <person name="Poetter M."/>
            <person name="Schwartz E."/>
            <person name="Strittmatter A."/>
            <person name="Voss I."/>
            <person name="Gottschalk G."/>
            <person name="Steinbuechel A."/>
            <person name="Friedrich B."/>
            <person name="Bowien B."/>
        </authorList>
    </citation>
    <scope>NUCLEOTIDE SEQUENCE [LARGE SCALE GENOMIC DNA]</scope>
    <source>
        <strain>ATCC 17699 / DSM 428 / KCTC 22496 / NCIMB 10442 / H16 / Stanier 337</strain>
    </source>
</reference>
<gene>
    <name evidence="1" type="primary">selU</name>
    <name type="ordered locus">H16_A0329</name>
</gene>
<feature type="chain" id="PRO_0000292707" description="tRNA 2-selenouridine synthase">
    <location>
        <begin position="1"/>
        <end position="367"/>
    </location>
</feature>
<feature type="domain" description="Rhodanese" evidence="1">
    <location>
        <begin position="12"/>
        <end position="135"/>
    </location>
</feature>
<feature type="active site" description="S-selanylcysteine intermediate" evidence="1">
    <location>
        <position position="95"/>
    </location>
</feature>
<sequence>MRPDTADFRTLFLSGVAMLDVRAPLEFARGAFPGAVNLPLMDDAERHEVGLCYAQKGQQAAIELGHQLVSGLRKAARIAAWAEFARAHPDGYLYCFRGGLRSQLVQQWLHAAGVDYPRVTGGYKAMRGFLIETTDAAAAEQQWFVLGGLTGSGKTDVLADVPAAIDLEGHARHRGSAFGRRALAQPPQIDFENALAIDVLRHIDAGWRALLVEDEGRFIGSRDVPQVLTQRMQASPLVWLEASFDERVERVLRDYVQGLAAEFIAEKGSTEGFEAYATRLREAMAGISPRLGGARYGKLSALLDQALAQQAERGEVDLHRGWIEVLLREYYDPMYAFQREQREARIVFRGDRAAVTDWLRAHTAQRG</sequence>
<comment type="function">
    <text evidence="1">Involved in the post-transcriptional modification of the uridine at the wobble position (U34) of tRNA(Lys), tRNA(Glu) and tRNA(Gln). Catalyzes the conversion of 2-thiouridine (S2U-RNA) to 2-selenouridine (Se2U-RNA). Acts in a two-step process involving geranylation of 2-thiouridine (S2U) to S-geranyl-2-thiouridine (geS2U) and subsequent selenation of the latter derivative to 2-selenouridine (Se2U) in the tRNA chain.</text>
</comment>
<comment type="catalytic activity">
    <reaction evidence="1">
        <text>5-methylaminomethyl-2-thiouridine(34) in tRNA + selenophosphate + (2E)-geranyl diphosphate + H2O + H(+) = 5-methylaminomethyl-2-selenouridine(34) in tRNA + (2E)-thiogeraniol + phosphate + diphosphate</text>
        <dbReference type="Rhea" id="RHEA:42716"/>
        <dbReference type="Rhea" id="RHEA-COMP:10195"/>
        <dbReference type="Rhea" id="RHEA-COMP:10196"/>
        <dbReference type="ChEBI" id="CHEBI:15377"/>
        <dbReference type="ChEBI" id="CHEBI:15378"/>
        <dbReference type="ChEBI" id="CHEBI:16144"/>
        <dbReference type="ChEBI" id="CHEBI:33019"/>
        <dbReference type="ChEBI" id="CHEBI:43474"/>
        <dbReference type="ChEBI" id="CHEBI:58057"/>
        <dbReference type="ChEBI" id="CHEBI:74455"/>
        <dbReference type="ChEBI" id="CHEBI:82743"/>
        <dbReference type="ChEBI" id="CHEBI:143703"/>
        <dbReference type="EC" id="2.9.1.3"/>
    </reaction>
    <physiologicalReaction direction="left-to-right" evidence="1">
        <dbReference type="Rhea" id="RHEA:42717"/>
    </physiologicalReaction>
</comment>
<comment type="catalytic activity">
    <reaction evidence="1">
        <text>5-methylaminomethyl-2-thiouridine(34) in tRNA + (2E)-geranyl diphosphate = 5-methylaminomethyl-S-(2E)-geranyl-thiouridine(34) in tRNA + diphosphate</text>
        <dbReference type="Rhea" id="RHEA:14085"/>
        <dbReference type="Rhea" id="RHEA-COMP:10195"/>
        <dbReference type="Rhea" id="RHEA-COMP:14654"/>
        <dbReference type="ChEBI" id="CHEBI:33019"/>
        <dbReference type="ChEBI" id="CHEBI:58057"/>
        <dbReference type="ChEBI" id="CHEBI:74455"/>
        <dbReference type="ChEBI" id="CHEBI:140632"/>
    </reaction>
    <physiologicalReaction direction="left-to-right" evidence="1">
        <dbReference type="Rhea" id="RHEA:14086"/>
    </physiologicalReaction>
</comment>
<comment type="catalytic activity">
    <reaction evidence="1">
        <text>5-methylaminomethyl-S-(2E)-geranyl-thiouridine(34) in tRNA + selenophosphate + H(+) = 5-methylaminomethyl-2-(Se-phospho)selenouridine(34) in tRNA + (2E)-thiogeraniol</text>
        <dbReference type="Rhea" id="RHEA:60172"/>
        <dbReference type="Rhea" id="RHEA-COMP:14654"/>
        <dbReference type="Rhea" id="RHEA-COMP:15523"/>
        <dbReference type="ChEBI" id="CHEBI:15378"/>
        <dbReference type="ChEBI" id="CHEBI:16144"/>
        <dbReference type="ChEBI" id="CHEBI:140632"/>
        <dbReference type="ChEBI" id="CHEBI:143702"/>
        <dbReference type="ChEBI" id="CHEBI:143703"/>
    </reaction>
    <physiologicalReaction direction="left-to-right" evidence="1">
        <dbReference type="Rhea" id="RHEA:60173"/>
    </physiologicalReaction>
</comment>
<comment type="catalytic activity">
    <reaction evidence="1">
        <text>5-methylaminomethyl-2-(Se-phospho)selenouridine(34) in tRNA + H2O = 5-methylaminomethyl-2-selenouridine(34) in tRNA + phosphate</text>
        <dbReference type="Rhea" id="RHEA:60176"/>
        <dbReference type="Rhea" id="RHEA-COMP:10196"/>
        <dbReference type="Rhea" id="RHEA-COMP:15523"/>
        <dbReference type="ChEBI" id="CHEBI:15377"/>
        <dbReference type="ChEBI" id="CHEBI:43474"/>
        <dbReference type="ChEBI" id="CHEBI:82743"/>
        <dbReference type="ChEBI" id="CHEBI:143702"/>
    </reaction>
    <physiologicalReaction direction="left-to-right" evidence="1">
        <dbReference type="Rhea" id="RHEA:60177"/>
    </physiologicalReaction>
</comment>
<comment type="subunit">
    <text evidence="1">Monomer.</text>
</comment>
<comment type="similarity">
    <text evidence="1">Belongs to the SelU family.</text>
</comment>
<dbReference type="EC" id="2.9.1.3" evidence="1"/>
<dbReference type="EMBL" id="AM260479">
    <property type="protein sequence ID" value="CAJ91480.1"/>
    <property type="molecule type" value="Genomic_DNA"/>
</dbReference>
<dbReference type="SMR" id="Q0KEU1"/>
<dbReference type="STRING" id="381666.H16_A0329"/>
<dbReference type="KEGG" id="reh:H16_A0329"/>
<dbReference type="eggNOG" id="COG2603">
    <property type="taxonomic scope" value="Bacteria"/>
</dbReference>
<dbReference type="HOGENOM" id="CLU_043456_1_0_4"/>
<dbReference type="OrthoDB" id="9808735at2"/>
<dbReference type="Proteomes" id="UP000008210">
    <property type="component" value="Chromosome 1"/>
</dbReference>
<dbReference type="GO" id="GO:0016765">
    <property type="term" value="F:transferase activity, transferring alkyl or aryl (other than methyl) groups"/>
    <property type="evidence" value="ECO:0007669"/>
    <property type="project" value="UniProtKB-UniRule"/>
</dbReference>
<dbReference type="GO" id="GO:0043828">
    <property type="term" value="F:tRNA 2-selenouridine synthase activity"/>
    <property type="evidence" value="ECO:0007669"/>
    <property type="project" value="UniProtKB-EC"/>
</dbReference>
<dbReference type="GO" id="GO:0002098">
    <property type="term" value="P:tRNA wobble uridine modification"/>
    <property type="evidence" value="ECO:0007669"/>
    <property type="project" value="UniProtKB-UniRule"/>
</dbReference>
<dbReference type="Gene3D" id="3.40.250.10">
    <property type="entry name" value="Rhodanese-like domain"/>
    <property type="match status" value="1"/>
</dbReference>
<dbReference type="HAMAP" id="MF_01622">
    <property type="entry name" value="tRNA_sel_U_synth"/>
    <property type="match status" value="1"/>
</dbReference>
<dbReference type="InterPro" id="IPR027417">
    <property type="entry name" value="P-loop_NTPase"/>
</dbReference>
<dbReference type="InterPro" id="IPR001763">
    <property type="entry name" value="Rhodanese-like_dom"/>
</dbReference>
<dbReference type="InterPro" id="IPR036873">
    <property type="entry name" value="Rhodanese-like_dom_sf"/>
</dbReference>
<dbReference type="InterPro" id="IPR017582">
    <property type="entry name" value="SelU"/>
</dbReference>
<dbReference type="NCBIfam" id="NF008751">
    <property type="entry name" value="PRK11784.1-3"/>
    <property type="match status" value="1"/>
</dbReference>
<dbReference type="NCBIfam" id="TIGR03167">
    <property type="entry name" value="tRNA_sel_U_synt"/>
    <property type="match status" value="1"/>
</dbReference>
<dbReference type="PANTHER" id="PTHR30401">
    <property type="entry name" value="TRNA 2-SELENOURIDINE SYNTHASE"/>
    <property type="match status" value="1"/>
</dbReference>
<dbReference type="PANTHER" id="PTHR30401:SF0">
    <property type="entry name" value="TRNA 2-SELENOURIDINE SYNTHASE"/>
    <property type="match status" value="1"/>
</dbReference>
<dbReference type="SMART" id="SM00450">
    <property type="entry name" value="RHOD"/>
    <property type="match status" value="1"/>
</dbReference>
<dbReference type="SUPFAM" id="SSF52540">
    <property type="entry name" value="P-loop containing nucleoside triphosphate hydrolases"/>
    <property type="match status" value="1"/>
</dbReference>
<dbReference type="SUPFAM" id="SSF52821">
    <property type="entry name" value="Rhodanese/Cell cycle control phosphatase"/>
    <property type="match status" value="1"/>
</dbReference>
<dbReference type="PROSITE" id="PS50206">
    <property type="entry name" value="RHODANESE_3"/>
    <property type="match status" value="1"/>
</dbReference>
<protein>
    <recommendedName>
        <fullName evidence="1">tRNA 2-selenouridine synthase</fullName>
        <ecNumber evidence="1">2.9.1.3</ecNumber>
    </recommendedName>
</protein>
<organism>
    <name type="scientific">Cupriavidus necator (strain ATCC 17699 / DSM 428 / KCTC 22496 / NCIMB 10442 / H16 / Stanier 337)</name>
    <name type="common">Ralstonia eutropha</name>
    <dbReference type="NCBI Taxonomy" id="381666"/>
    <lineage>
        <taxon>Bacteria</taxon>
        <taxon>Pseudomonadati</taxon>
        <taxon>Pseudomonadota</taxon>
        <taxon>Betaproteobacteria</taxon>
        <taxon>Burkholderiales</taxon>
        <taxon>Burkholderiaceae</taxon>
        <taxon>Cupriavidus</taxon>
    </lineage>
</organism>